<accession>Q97BC5</accession>
<evidence type="ECO:0000255" key="1">
    <source>
        <dbReference type="HAMAP-Rule" id="MF_00308"/>
    </source>
</evidence>
<evidence type="ECO:0000305" key="2"/>
<sequence length="130" mass="14618">MARDVEAQLNYIESLISSVDAQIDAINKMVLEVQTTIQILSSDELRQSKERLISVGSGIFANGNLDLDSDLIVPIGSGVYIAEKRSETIERLKANIENLKESIQKLMDQRRTLVDQYNTVYTTEATRNIK</sequence>
<protein>
    <recommendedName>
        <fullName evidence="1">Prefoldin subunit alpha</fullName>
    </recommendedName>
    <alternativeName>
        <fullName evidence="1">GimC subunit alpha</fullName>
    </alternativeName>
</protein>
<feature type="chain" id="PRO_0000153691" description="Prefoldin subunit alpha">
    <location>
        <begin position="1"/>
        <end position="130"/>
    </location>
</feature>
<name>PFDA_THEVO</name>
<proteinExistence type="inferred from homology"/>
<organism>
    <name type="scientific">Thermoplasma volcanium (strain ATCC 51530 / DSM 4299 / JCM 9571 / NBRC 15438 / GSS1)</name>
    <dbReference type="NCBI Taxonomy" id="273116"/>
    <lineage>
        <taxon>Archaea</taxon>
        <taxon>Methanobacteriati</taxon>
        <taxon>Thermoplasmatota</taxon>
        <taxon>Thermoplasmata</taxon>
        <taxon>Thermoplasmatales</taxon>
        <taxon>Thermoplasmataceae</taxon>
        <taxon>Thermoplasma</taxon>
    </lineage>
</organism>
<reference key="1">
    <citation type="journal article" date="2000" name="Proc. Natl. Acad. Sci. U.S.A.">
        <title>Archaeal adaptation to higher temperatures revealed by genomic sequence of Thermoplasma volcanium.</title>
        <authorList>
            <person name="Kawashima T."/>
            <person name="Amano N."/>
            <person name="Koike H."/>
            <person name="Makino S."/>
            <person name="Higuchi S."/>
            <person name="Kawashima-Ohya Y."/>
            <person name="Watanabe K."/>
            <person name="Yamazaki M."/>
            <person name="Kanehori K."/>
            <person name="Kawamoto T."/>
            <person name="Nunoshiba T."/>
            <person name="Yamamoto Y."/>
            <person name="Aramaki H."/>
            <person name="Makino K."/>
            <person name="Suzuki M."/>
        </authorList>
    </citation>
    <scope>NUCLEOTIDE SEQUENCE [LARGE SCALE GENOMIC DNA]</scope>
    <source>
        <strain>ATCC 51530 / DSM 4299 / JCM 9571 / NBRC 15438 / GSS1</strain>
    </source>
</reference>
<keyword id="KW-0143">Chaperone</keyword>
<keyword id="KW-0963">Cytoplasm</keyword>
<comment type="function">
    <text evidence="1">Molecular chaperone capable of stabilizing a range of proteins. Seems to fulfill an ATP-independent, HSP70-like function in archaeal de novo protein folding.</text>
</comment>
<comment type="subunit">
    <text evidence="1">Heterohexamer of two alpha and four beta subunits.</text>
</comment>
<comment type="subcellular location">
    <subcellularLocation>
        <location evidence="1">Cytoplasm</location>
    </subcellularLocation>
</comment>
<comment type="similarity">
    <text evidence="2">Belongs to the prefoldin subunit alpha family.</text>
</comment>
<gene>
    <name evidence="1" type="primary">pfdA</name>
    <name type="ordered locus">TV0531</name>
    <name type="ORF">TVG0522388</name>
</gene>
<dbReference type="EMBL" id="BA000011">
    <property type="protein sequence ID" value="BAB59673.1"/>
    <property type="molecule type" value="Genomic_DNA"/>
</dbReference>
<dbReference type="RefSeq" id="WP_010916789.1">
    <property type="nucleotide sequence ID" value="NC_002689.2"/>
</dbReference>
<dbReference type="SMR" id="Q97BC5"/>
<dbReference type="STRING" id="273116.gene:9381315"/>
<dbReference type="PaxDb" id="273116-14324746"/>
<dbReference type="GeneID" id="1441047"/>
<dbReference type="KEGG" id="tvo:TVG0522388"/>
<dbReference type="eggNOG" id="arCOG01341">
    <property type="taxonomic scope" value="Archaea"/>
</dbReference>
<dbReference type="HOGENOM" id="CLU_156999_0_0_2"/>
<dbReference type="OrthoDB" id="56120at2157"/>
<dbReference type="PhylomeDB" id="Q97BC5"/>
<dbReference type="Proteomes" id="UP000001017">
    <property type="component" value="Chromosome"/>
</dbReference>
<dbReference type="GO" id="GO:0005737">
    <property type="term" value="C:cytoplasm"/>
    <property type="evidence" value="ECO:0007669"/>
    <property type="project" value="UniProtKB-SubCell"/>
</dbReference>
<dbReference type="GO" id="GO:0016272">
    <property type="term" value="C:prefoldin complex"/>
    <property type="evidence" value="ECO:0007669"/>
    <property type="project" value="UniProtKB-UniRule"/>
</dbReference>
<dbReference type="GO" id="GO:0051082">
    <property type="term" value="F:unfolded protein binding"/>
    <property type="evidence" value="ECO:0007669"/>
    <property type="project" value="UniProtKB-UniRule"/>
</dbReference>
<dbReference type="GO" id="GO:0006457">
    <property type="term" value="P:protein folding"/>
    <property type="evidence" value="ECO:0007669"/>
    <property type="project" value="UniProtKB-UniRule"/>
</dbReference>
<dbReference type="Gene3D" id="1.10.287.370">
    <property type="match status" value="1"/>
</dbReference>
<dbReference type="HAMAP" id="MF_00308">
    <property type="entry name" value="PfdA"/>
    <property type="match status" value="1"/>
</dbReference>
<dbReference type="InterPro" id="IPR011599">
    <property type="entry name" value="PFD_alpha_archaea"/>
</dbReference>
<dbReference type="InterPro" id="IPR009053">
    <property type="entry name" value="Prefoldin"/>
</dbReference>
<dbReference type="InterPro" id="IPR004127">
    <property type="entry name" value="Prefoldin_subunit_alpha"/>
</dbReference>
<dbReference type="NCBIfam" id="TIGR00293">
    <property type="entry name" value="prefoldin subunit alpha"/>
    <property type="match status" value="1"/>
</dbReference>
<dbReference type="Pfam" id="PF02996">
    <property type="entry name" value="Prefoldin"/>
    <property type="match status" value="1"/>
</dbReference>
<dbReference type="SUPFAM" id="SSF46579">
    <property type="entry name" value="Prefoldin"/>
    <property type="match status" value="1"/>
</dbReference>